<sequence>MTALDWRSALTADEQRSVRALVTATTAVDGVAPVGEQVLRELGQQRTEHLLVAGSRPGGPIIGYLNLSPPRGAGGAMAELVVHPQSRRRGIGTAMARAALAKTAGRNQFWAHGTLDPARATASALGLVGVRELIQMRRPLRDIPEPTIPDGVVIRTYAGTSDDAELLRVNNAAFAGHPEQGGWTAVQLAERRGEAWFDPDGLILAFGDSPRERPGRLLGFHWTKVHPDHPGLGEVYVLGVDPAAQRRGLGQMLTSIGIVSLARRLGGRKTLDPAVEPAVLLYVESDNVAAVRTYQSLGFTTYSVDTAYALAGTDN</sequence>
<proteinExistence type="evidence at protein level"/>
<comment type="function">
    <text evidence="1">Catalyzes the transfer of acetyl from acetyl-CoA to desacetylmycothiol (Cys-GlcN-Ins) to form mycothiol.</text>
</comment>
<comment type="catalytic activity">
    <reaction evidence="3">
        <text>1D-myo-inositol 2-(L-cysteinylamino)-2-deoxy-alpha-D-glucopyranoside + acetyl-CoA = mycothiol + CoA + H(+)</text>
        <dbReference type="Rhea" id="RHEA:26172"/>
        <dbReference type="ChEBI" id="CHEBI:15378"/>
        <dbReference type="ChEBI" id="CHEBI:16768"/>
        <dbReference type="ChEBI" id="CHEBI:57287"/>
        <dbReference type="ChEBI" id="CHEBI:57288"/>
        <dbReference type="ChEBI" id="CHEBI:58887"/>
        <dbReference type="EC" id="2.3.1.189"/>
    </reaction>
</comment>
<comment type="biophysicochemical properties">
    <kinetics>
        <KM evidence="3">40 uM for acetyl-CoA</KM>
        <KM evidence="3">82 uM for deacetylmycothiol</KM>
    </kinetics>
    <phDependence>
        <text evidence="3">Optimum pH is 8.2-8.5.</text>
    </phDependence>
</comment>
<comment type="subunit">
    <text evidence="2 3">Monomer.</text>
</comment>
<comment type="miscellaneous">
    <text>The N-terminal acetyl-CoA does not function as substrate in the catalyzed reaction, but is believed to have a structural role.</text>
</comment>
<comment type="miscellaneous">
    <text>Was identified as a high-confidence drug target.</text>
</comment>
<comment type="similarity">
    <text evidence="4">Belongs to the acetyltransferase family. MshD subfamily.</text>
</comment>
<keyword id="KW-0002">3D-structure</keyword>
<keyword id="KW-0012">Acyltransferase</keyword>
<keyword id="KW-1185">Reference proteome</keyword>
<keyword id="KW-0677">Repeat</keyword>
<keyword id="KW-0808">Transferase</keyword>
<organism>
    <name type="scientific">Mycobacterium tuberculosis (strain ATCC 25618 / H37Rv)</name>
    <dbReference type="NCBI Taxonomy" id="83332"/>
    <lineage>
        <taxon>Bacteria</taxon>
        <taxon>Bacillati</taxon>
        <taxon>Actinomycetota</taxon>
        <taxon>Actinomycetes</taxon>
        <taxon>Mycobacteriales</taxon>
        <taxon>Mycobacteriaceae</taxon>
        <taxon>Mycobacterium</taxon>
        <taxon>Mycobacterium tuberculosis complex</taxon>
    </lineage>
</organism>
<evidence type="ECO:0000269" key="1">
    <source>
    </source>
</evidence>
<evidence type="ECO:0000269" key="2">
    <source>
    </source>
</evidence>
<evidence type="ECO:0000269" key="3">
    <source>
    </source>
</evidence>
<evidence type="ECO:0000305" key="4"/>
<evidence type="ECO:0007829" key="5">
    <source>
        <dbReference type="PDB" id="1P0H"/>
    </source>
</evidence>
<evidence type="ECO:0007829" key="6">
    <source>
        <dbReference type="PDB" id="2C27"/>
    </source>
</evidence>
<reference key="1">
    <citation type="journal article" date="1998" name="Nature">
        <title>Deciphering the biology of Mycobacterium tuberculosis from the complete genome sequence.</title>
        <authorList>
            <person name="Cole S.T."/>
            <person name="Brosch R."/>
            <person name="Parkhill J."/>
            <person name="Garnier T."/>
            <person name="Churcher C.M."/>
            <person name="Harris D.E."/>
            <person name="Gordon S.V."/>
            <person name="Eiglmeier K."/>
            <person name="Gas S."/>
            <person name="Barry C.E. III"/>
            <person name="Tekaia F."/>
            <person name="Badcock K."/>
            <person name="Basham D."/>
            <person name="Brown D."/>
            <person name="Chillingworth T."/>
            <person name="Connor R."/>
            <person name="Davies R.M."/>
            <person name="Devlin K."/>
            <person name="Feltwell T."/>
            <person name="Gentles S."/>
            <person name="Hamlin N."/>
            <person name="Holroyd S."/>
            <person name="Hornsby T."/>
            <person name="Jagels K."/>
            <person name="Krogh A."/>
            <person name="McLean J."/>
            <person name="Moule S."/>
            <person name="Murphy L.D."/>
            <person name="Oliver S."/>
            <person name="Osborne J."/>
            <person name="Quail M.A."/>
            <person name="Rajandream M.A."/>
            <person name="Rogers J."/>
            <person name="Rutter S."/>
            <person name="Seeger K."/>
            <person name="Skelton S."/>
            <person name="Squares S."/>
            <person name="Squares R."/>
            <person name="Sulston J.E."/>
            <person name="Taylor K."/>
            <person name="Whitehead S."/>
            <person name="Barrell B.G."/>
        </authorList>
    </citation>
    <scope>NUCLEOTIDE SEQUENCE [LARGE SCALE GENOMIC DNA]</scope>
    <source>
        <strain>ATCC 25618 / H37Rv</strain>
    </source>
</reference>
<reference key="2">
    <citation type="journal article" date="2002" name="Arch. Microbiol.">
        <title>Identification of the mycothiol synthase gene (mshD) encoding the acetyltransferase producing mycothiol in actinomycetes.</title>
        <authorList>
            <person name="Koledin T."/>
            <person name="Newton G.L."/>
            <person name="Fahey R.C."/>
        </authorList>
    </citation>
    <scope>FUNCTION</scope>
</reference>
<reference key="3">
    <citation type="journal article" date="2008" name="BMC Syst. Biol.">
        <title>targetTB: a target identification pipeline for Mycobacterium tuberculosis through an interactome, reactome and genome-scale structural analysis.</title>
        <authorList>
            <person name="Raman K."/>
            <person name="Yeturu K."/>
            <person name="Chandra N."/>
        </authorList>
    </citation>
    <scope>IDENTIFICATION AS A DRUG TARGET [LARGE SCALE ANALYSIS]</scope>
</reference>
<reference key="4">
    <citation type="journal article" date="2011" name="Mol. Cell. Proteomics">
        <title>Proteogenomic analysis of Mycobacterium tuberculosis by high resolution mass spectrometry.</title>
        <authorList>
            <person name="Kelkar D.S."/>
            <person name="Kumar D."/>
            <person name="Kumar P."/>
            <person name="Balakrishnan L."/>
            <person name="Muthusamy B."/>
            <person name="Yadav A.K."/>
            <person name="Shrivastava P."/>
            <person name="Marimuthu A."/>
            <person name="Anand S."/>
            <person name="Sundaram H."/>
            <person name="Kingsbury R."/>
            <person name="Harsha H.C."/>
            <person name="Nair B."/>
            <person name="Prasad T.S."/>
            <person name="Chauhan D.S."/>
            <person name="Katoch K."/>
            <person name="Katoch V.M."/>
            <person name="Kumar P."/>
            <person name="Chaerkady R."/>
            <person name="Ramachandran S."/>
            <person name="Dash D."/>
            <person name="Pandey A."/>
        </authorList>
    </citation>
    <scope>IDENTIFICATION BY MASS SPECTROMETRY [LARGE SCALE ANALYSIS]</scope>
    <source>
        <strain>ATCC 25618 / H37Rv</strain>
    </source>
</reference>
<reference key="5">
    <citation type="journal article" date="2003" name="Protein Sci.">
        <title>Crystal structure of mycothiol synthase (Rv0819) from Mycobacterium tuberculosis shows structural homology to the GNAT family of N-acetyltransferases.</title>
        <authorList>
            <person name="Vetting M.W."/>
            <person name="Roderick S.L."/>
            <person name="Yu M."/>
            <person name="Blanchard J.S."/>
        </authorList>
    </citation>
    <scope>X-RAY CRYSTALLOGRAPHY (1.6 ANGSTROMS) IN COMPLEX WITH COA AND ACETYL-COA</scope>
    <scope>SUBUNIT</scope>
</reference>
<reference key="6">
    <citation type="journal article" date="2006" name="J. Biol. Chem.">
        <title>The substrate-induced conformational change of Mycobacterium tuberculosis mycothiol synthase.</title>
        <authorList>
            <person name="Vetting M.W."/>
            <person name="Yu M."/>
            <person name="Rendle P.M."/>
            <person name="Blanchard J.S."/>
        </authorList>
    </citation>
    <scope>X-RAY CRYSTALLOGRAPHY (1.8 ANGSTROMS) IN COMPLEX WITH COA AND DESACETYLMYCOTHIOL</scope>
    <scope>CATALYTIC ACTIVITY</scope>
    <scope>BIOPHYSICOCHEMICAL PROPERTIES</scope>
    <scope>REACTION MECHANISM</scope>
</reference>
<feature type="chain" id="PRO_0000399828" description="Mycothiol acetyltransferase">
    <location>
        <begin position="1"/>
        <end position="315"/>
    </location>
</feature>
<feature type="domain" description="N-acetyltransferase 1">
    <location>
        <begin position="4"/>
        <end position="141"/>
    </location>
</feature>
<feature type="domain" description="N-acetyltransferase 2">
    <location>
        <begin position="152"/>
        <end position="315"/>
    </location>
</feature>
<feature type="binding site" evidence="3">
    <location>
        <position position="36"/>
    </location>
    <ligand>
        <name>1D-myo-inositol 2-(L-cysteinylamino)-2-deoxy-alpha-D-glucopyranoside</name>
        <dbReference type="ChEBI" id="CHEBI:58887"/>
    </ligand>
</feature>
<feature type="binding site">
    <location>
        <begin position="80"/>
        <end position="82"/>
    </location>
    <ligand>
        <name>acetyl-CoA</name>
        <dbReference type="ChEBI" id="CHEBI:57288"/>
        <label>1</label>
    </ligand>
</feature>
<feature type="binding site">
    <location>
        <begin position="88"/>
        <end position="93"/>
    </location>
    <ligand>
        <name>acetyl-CoA</name>
        <dbReference type="ChEBI" id="CHEBI:57288"/>
        <label>1</label>
    </ligand>
</feature>
<feature type="binding site" evidence="3">
    <location>
        <position position="179"/>
    </location>
    <ligand>
        <name>1D-myo-inositol 2-(L-cysteinylamino)-2-deoxy-alpha-D-glucopyranoside</name>
        <dbReference type="ChEBI" id="CHEBI:58887"/>
    </ligand>
</feature>
<feature type="binding site" evidence="3">
    <location>
        <position position="224"/>
    </location>
    <ligand>
        <name>1D-myo-inositol 2-(L-cysteinylamino)-2-deoxy-alpha-D-glucopyranoside</name>
        <dbReference type="ChEBI" id="CHEBI:58887"/>
    </ligand>
</feature>
<feature type="binding site" evidence="3">
    <location>
        <position position="234"/>
    </location>
    <ligand>
        <name>1D-myo-inositol 2-(L-cysteinylamino)-2-deoxy-alpha-D-glucopyranoside</name>
        <dbReference type="ChEBI" id="CHEBI:58887"/>
    </ligand>
</feature>
<feature type="binding site">
    <location>
        <begin position="238"/>
        <end position="240"/>
    </location>
    <ligand>
        <name>acetyl-CoA</name>
        <dbReference type="ChEBI" id="CHEBI:57288"/>
        <label>2</label>
    </ligand>
</feature>
<feature type="binding site">
    <location>
        <begin position="245"/>
        <end position="251"/>
    </location>
    <ligand>
        <name>acetyl-CoA</name>
        <dbReference type="ChEBI" id="CHEBI:57288"/>
        <label>2</label>
    </ligand>
</feature>
<feature type="binding site" evidence="3">
    <location>
        <position position="282"/>
    </location>
    <ligand>
        <name>1D-myo-inositol 2-(L-cysteinylamino)-2-deoxy-alpha-D-glucopyranoside</name>
        <dbReference type="ChEBI" id="CHEBI:58887"/>
    </ligand>
</feature>
<feature type="binding site">
    <location>
        <begin position="287"/>
        <end position="292"/>
    </location>
    <ligand>
        <name>acetyl-CoA</name>
        <dbReference type="ChEBI" id="CHEBI:57288"/>
        <label>2</label>
    </ligand>
</feature>
<feature type="strand" evidence="6">
    <location>
        <begin position="7"/>
        <end position="9"/>
    </location>
</feature>
<feature type="helix" evidence="5">
    <location>
        <begin position="12"/>
        <end position="29"/>
    </location>
</feature>
<feature type="helix" evidence="5">
    <location>
        <begin position="36"/>
        <end position="41"/>
    </location>
</feature>
<feature type="strand" evidence="5">
    <location>
        <begin position="44"/>
        <end position="53"/>
    </location>
</feature>
<feature type="strand" evidence="5">
    <location>
        <begin position="61"/>
        <end position="68"/>
    </location>
</feature>
<feature type="strand" evidence="5">
    <location>
        <begin position="77"/>
        <end position="82"/>
    </location>
</feature>
<feature type="helix" evidence="5">
    <location>
        <begin position="84"/>
        <end position="86"/>
    </location>
</feature>
<feature type="strand" evidence="5">
    <location>
        <begin position="88"/>
        <end position="90"/>
    </location>
</feature>
<feature type="helix" evidence="5">
    <location>
        <begin position="91"/>
        <end position="102"/>
    </location>
</feature>
<feature type="turn" evidence="5">
    <location>
        <begin position="103"/>
        <end position="105"/>
    </location>
</feature>
<feature type="strand" evidence="5">
    <location>
        <begin position="108"/>
        <end position="111"/>
    </location>
</feature>
<feature type="helix" evidence="5">
    <location>
        <begin position="112"/>
        <end position="114"/>
    </location>
</feature>
<feature type="helix" evidence="5">
    <location>
        <begin position="116"/>
        <end position="124"/>
    </location>
</feature>
<feature type="strand" evidence="5">
    <location>
        <begin position="128"/>
        <end position="142"/>
    </location>
</feature>
<feature type="strand" evidence="5">
    <location>
        <begin position="152"/>
        <end position="156"/>
    </location>
</feature>
<feature type="helix" evidence="5">
    <location>
        <begin position="160"/>
        <end position="162"/>
    </location>
</feature>
<feature type="helix" evidence="5">
    <location>
        <begin position="163"/>
        <end position="173"/>
    </location>
</feature>
<feature type="turn" evidence="5">
    <location>
        <begin position="174"/>
        <end position="176"/>
    </location>
</feature>
<feature type="turn" evidence="5">
    <location>
        <begin position="178"/>
        <end position="180"/>
    </location>
</feature>
<feature type="helix" evidence="5">
    <location>
        <begin position="185"/>
        <end position="192"/>
    </location>
</feature>
<feature type="helix" evidence="5">
    <location>
        <begin position="199"/>
        <end position="201"/>
    </location>
</feature>
<feature type="strand" evidence="5">
    <location>
        <begin position="202"/>
        <end position="207"/>
    </location>
</feature>
<feature type="strand" evidence="6">
    <location>
        <begin position="211"/>
        <end position="213"/>
    </location>
</feature>
<feature type="strand" evidence="5">
    <location>
        <begin position="217"/>
        <end position="224"/>
    </location>
</feature>
<feature type="strand" evidence="5">
    <location>
        <begin position="232"/>
        <end position="240"/>
    </location>
</feature>
<feature type="helix" evidence="5">
    <location>
        <begin position="242"/>
        <end position="244"/>
    </location>
</feature>
<feature type="strand" evidence="5">
    <location>
        <begin position="246"/>
        <end position="248"/>
    </location>
</feature>
<feature type="helix" evidence="5">
    <location>
        <begin position="249"/>
        <end position="264"/>
    </location>
</feature>
<feature type="strand" evidence="5">
    <location>
        <begin position="278"/>
        <end position="284"/>
    </location>
</feature>
<feature type="helix" evidence="5">
    <location>
        <begin position="288"/>
        <end position="296"/>
    </location>
</feature>
<feature type="strand" evidence="5">
    <location>
        <begin position="300"/>
        <end position="309"/>
    </location>
</feature>
<gene>
    <name type="primary">mshD</name>
    <name type="ordered locus">Rv0819</name>
</gene>
<dbReference type="EC" id="2.3.1.189"/>
<dbReference type="EMBL" id="AL123456">
    <property type="protein sequence ID" value="CCP43567.1"/>
    <property type="molecule type" value="Genomic_DNA"/>
</dbReference>
<dbReference type="PIR" id="C70810">
    <property type="entry name" value="C70810"/>
</dbReference>
<dbReference type="RefSeq" id="NP_215334.1">
    <property type="nucleotide sequence ID" value="NC_000962.3"/>
</dbReference>
<dbReference type="RefSeq" id="WP_003404307.1">
    <property type="nucleotide sequence ID" value="NZ_NVQJ01000066.1"/>
</dbReference>
<dbReference type="PDB" id="1OZP">
    <property type="method" value="X-ray"/>
    <property type="resolution" value="1.70 A"/>
    <property type="chains" value="A=1-315"/>
</dbReference>
<dbReference type="PDB" id="1P0H">
    <property type="method" value="X-ray"/>
    <property type="resolution" value="1.60 A"/>
    <property type="chains" value="A=1-315"/>
</dbReference>
<dbReference type="PDB" id="2C27">
    <property type="method" value="X-ray"/>
    <property type="resolution" value="1.80 A"/>
    <property type="chains" value="A=1-315"/>
</dbReference>
<dbReference type="PDBsum" id="1OZP"/>
<dbReference type="PDBsum" id="1P0H"/>
<dbReference type="PDBsum" id="2C27"/>
<dbReference type="SMR" id="P9WJM7"/>
<dbReference type="STRING" id="83332.Rv0819"/>
<dbReference type="DrugBank" id="DB01992">
    <property type="generic name" value="Coenzyme A"/>
</dbReference>
<dbReference type="PaxDb" id="83332-Rv0819"/>
<dbReference type="DNASU" id="885251"/>
<dbReference type="GeneID" id="885251"/>
<dbReference type="KEGG" id="mtu:Rv0819"/>
<dbReference type="KEGG" id="mtv:RVBD_0819"/>
<dbReference type="TubercuList" id="Rv0819"/>
<dbReference type="eggNOG" id="COG0454">
    <property type="taxonomic scope" value="Bacteria"/>
</dbReference>
<dbReference type="eggNOG" id="COG0456">
    <property type="taxonomic scope" value="Bacteria"/>
</dbReference>
<dbReference type="InParanoid" id="P9WJM7"/>
<dbReference type="OrthoDB" id="3208058at2"/>
<dbReference type="PhylomeDB" id="P9WJM7"/>
<dbReference type="BioCyc" id="MetaCyc:G185E-4968-MONOMER"/>
<dbReference type="BRENDA" id="2.3.1.189">
    <property type="organism ID" value="3445"/>
</dbReference>
<dbReference type="Reactome" id="R-MTU-879299">
    <property type="pathway name" value="Mycothiol biosynthesis"/>
</dbReference>
<dbReference type="EvolutionaryTrace" id="P9WJM7"/>
<dbReference type="Proteomes" id="UP000001584">
    <property type="component" value="Chromosome"/>
</dbReference>
<dbReference type="GO" id="GO:0005829">
    <property type="term" value="C:cytosol"/>
    <property type="evidence" value="ECO:0000304"/>
    <property type="project" value="Reactome"/>
</dbReference>
<dbReference type="GO" id="GO:0035447">
    <property type="term" value="F:mycothiol synthase activity"/>
    <property type="evidence" value="ECO:0000314"/>
    <property type="project" value="MTBBASE"/>
</dbReference>
<dbReference type="GO" id="GO:0008999">
    <property type="term" value="F:protein-N-terminal-alanine acetyltransferase activity"/>
    <property type="evidence" value="ECO:0000318"/>
    <property type="project" value="GO_Central"/>
</dbReference>
<dbReference type="GO" id="GO:0051701">
    <property type="term" value="P:biological process involved in interaction with host"/>
    <property type="evidence" value="ECO:0000315"/>
    <property type="project" value="MTBBASE"/>
</dbReference>
<dbReference type="GO" id="GO:0071468">
    <property type="term" value="P:cellular response to acidic pH"/>
    <property type="evidence" value="ECO:0000315"/>
    <property type="project" value="UniProtKB"/>
</dbReference>
<dbReference type="GO" id="GO:0070301">
    <property type="term" value="P:cellular response to hydrogen peroxide"/>
    <property type="evidence" value="ECO:0000315"/>
    <property type="project" value="UniProtKB"/>
</dbReference>
<dbReference type="GO" id="GO:0010125">
    <property type="term" value="P:mycothiol biosynthetic process"/>
    <property type="evidence" value="ECO:0000314"/>
    <property type="project" value="MTBBASE"/>
</dbReference>
<dbReference type="GO" id="GO:0010126">
    <property type="term" value="P:mycothiol metabolic process"/>
    <property type="evidence" value="ECO:0000315"/>
    <property type="project" value="UniProtKB"/>
</dbReference>
<dbReference type="CDD" id="cd04301">
    <property type="entry name" value="NAT_SF"/>
    <property type="match status" value="2"/>
</dbReference>
<dbReference type="FunFam" id="3.40.630.30:FF:000089">
    <property type="entry name" value="Mycothiol acetyltransferase"/>
    <property type="match status" value="1"/>
</dbReference>
<dbReference type="Gene3D" id="3.40.630.30">
    <property type="match status" value="1"/>
</dbReference>
<dbReference type="HAMAP" id="MF_01698">
    <property type="entry name" value="MshD"/>
    <property type="match status" value="1"/>
</dbReference>
<dbReference type="InterPro" id="IPR016181">
    <property type="entry name" value="Acyl_CoA_acyltransferase"/>
</dbReference>
<dbReference type="InterPro" id="IPR000182">
    <property type="entry name" value="GNAT_dom"/>
</dbReference>
<dbReference type="InterPro" id="IPR050276">
    <property type="entry name" value="MshD_Acetyltransferase"/>
</dbReference>
<dbReference type="InterPro" id="IPR017813">
    <property type="entry name" value="Mycothiol_AcTrfase"/>
</dbReference>
<dbReference type="NCBIfam" id="TIGR03448">
    <property type="entry name" value="mycothiol_MshD"/>
    <property type="match status" value="1"/>
</dbReference>
<dbReference type="PANTHER" id="PTHR43617">
    <property type="entry name" value="L-AMINO ACID N-ACETYLTRANSFERASE"/>
    <property type="match status" value="1"/>
</dbReference>
<dbReference type="PANTHER" id="PTHR43617:SF31">
    <property type="entry name" value="MYCOTHIOL ACETYLTRANSFERASE"/>
    <property type="match status" value="1"/>
</dbReference>
<dbReference type="Pfam" id="PF00583">
    <property type="entry name" value="Acetyltransf_1"/>
    <property type="match status" value="2"/>
</dbReference>
<dbReference type="PIRSF" id="PIRSF021524">
    <property type="entry name" value="MSH_acetyltransferase"/>
    <property type="match status" value="1"/>
</dbReference>
<dbReference type="SUPFAM" id="SSF55729">
    <property type="entry name" value="Acyl-CoA N-acyltransferases (Nat)"/>
    <property type="match status" value="1"/>
</dbReference>
<dbReference type="PROSITE" id="PS51186">
    <property type="entry name" value="GNAT"/>
    <property type="match status" value="2"/>
</dbReference>
<accession>P9WJM7</accession>
<accession>L0T7T7</accession>
<accession>O53831</accession>
<accession>Q7D982</accession>
<protein>
    <recommendedName>
        <fullName>Mycothiol acetyltransferase</fullName>
        <shortName>MSH acetyltransferase</shortName>
        <ecNumber>2.3.1.189</ecNumber>
    </recommendedName>
    <alternativeName>
        <fullName>Mycothiol synthase</fullName>
    </alternativeName>
</protein>
<name>MSHD_MYCTU</name>